<gene>
    <name evidence="1" type="primary">tpiA</name>
    <name type="ordered locus">VSAL_I0283</name>
</gene>
<reference key="1">
    <citation type="journal article" date="2008" name="BMC Genomics">
        <title>The genome sequence of the fish pathogen Aliivibrio salmonicida strain LFI1238 shows extensive evidence of gene decay.</title>
        <authorList>
            <person name="Hjerde E."/>
            <person name="Lorentzen M.S."/>
            <person name="Holden M.T."/>
            <person name="Seeger K."/>
            <person name="Paulsen S."/>
            <person name="Bason N."/>
            <person name="Churcher C."/>
            <person name="Harris D."/>
            <person name="Norbertczak H."/>
            <person name="Quail M.A."/>
            <person name="Sanders S."/>
            <person name="Thurston S."/>
            <person name="Parkhill J."/>
            <person name="Willassen N.P."/>
            <person name="Thomson N.R."/>
        </authorList>
    </citation>
    <scope>NUCLEOTIDE SEQUENCE [LARGE SCALE GENOMIC DNA]</scope>
    <source>
        <strain>LFI1238</strain>
    </source>
</reference>
<keyword id="KW-0963">Cytoplasm</keyword>
<keyword id="KW-0312">Gluconeogenesis</keyword>
<keyword id="KW-0324">Glycolysis</keyword>
<keyword id="KW-0413">Isomerase</keyword>
<evidence type="ECO:0000255" key="1">
    <source>
        <dbReference type="HAMAP-Rule" id="MF_00147"/>
    </source>
</evidence>
<accession>B6EPI8</accession>
<comment type="function">
    <text evidence="1">Involved in the gluconeogenesis. Catalyzes stereospecifically the conversion of dihydroxyacetone phosphate (DHAP) to D-glyceraldehyde-3-phosphate (G3P).</text>
</comment>
<comment type="catalytic activity">
    <reaction evidence="1">
        <text>D-glyceraldehyde 3-phosphate = dihydroxyacetone phosphate</text>
        <dbReference type="Rhea" id="RHEA:18585"/>
        <dbReference type="ChEBI" id="CHEBI:57642"/>
        <dbReference type="ChEBI" id="CHEBI:59776"/>
        <dbReference type="EC" id="5.3.1.1"/>
    </reaction>
</comment>
<comment type="pathway">
    <text evidence="1">Carbohydrate biosynthesis; gluconeogenesis.</text>
</comment>
<comment type="pathway">
    <text evidence="1">Carbohydrate degradation; glycolysis; D-glyceraldehyde 3-phosphate from glycerone phosphate: step 1/1.</text>
</comment>
<comment type="subunit">
    <text evidence="1">Homodimer.</text>
</comment>
<comment type="subcellular location">
    <subcellularLocation>
        <location evidence="1">Cytoplasm</location>
    </subcellularLocation>
</comment>
<comment type="similarity">
    <text evidence="1">Belongs to the triosephosphate isomerase family.</text>
</comment>
<proteinExistence type="inferred from homology"/>
<feature type="chain" id="PRO_1000096473" description="Triosephosphate isomerase">
    <location>
        <begin position="1"/>
        <end position="256"/>
    </location>
</feature>
<feature type="active site" description="Electrophile" evidence="1">
    <location>
        <position position="97"/>
    </location>
</feature>
<feature type="active site" description="Proton acceptor" evidence="1">
    <location>
        <position position="169"/>
    </location>
</feature>
<feature type="binding site" evidence="1">
    <location>
        <begin position="9"/>
        <end position="11"/>
    </location>
    <ligand>
        <name>substrate</name>
    </ligand>
</feature>
<feature type="binding site" evidence="1">
    <location>
        <position position="175"/>
    </location>
    <ligand>
        <name>substrate</name>
    </ligand>
</feature>
<feature type="binding site" evidence="1">
    <location>
        <position position="214"/>
    </location>
    <ligand>
        <name>substrate</name>
    </ligand>
</feature>
<feature type="binding site" evidence="1">
    <location>
        <begin position="235"/>
        <end position="236"/>
    </location>
    <ligand>
        <name>substrate</name>
    </ligand>
</feature>
<dbReference type="EC" id="5.3.1.1" evidence="1"/>
<dbReference type="EMBL" id="FM178379">
    <property type="protein sequence ID" value="CAQ77968.1"/>
    <property type="molecule type" value="Genomic_DNA"/>
</dbReference>
<dbReference type="RefSeq" id="WP_012549122.1">
    <property type="nucleotide sequence ID" value="NC_011312.1"/>
</dbReference>
<dbReference type="SMR" id="B6EPI8"/>
<dbReference type="KEGG" id="vsa:VSAL_I0283"/>
<dbReference type="eggNOG" id="COG0149">
    <property type="taxonomic scope" value="Bacteria"/>
</dbReference>
<dbReference type="HOGENOM" id="CLU_024251_2_3_6"/>
<dbReference type="UniPathway" id="UPA00109">
    <property type="reaction ID" value="UER00189"/>
</dbReference>
<dbReference type="UniPathway" id="UPA00138"/>
<dbReference type="Proteomes" id="UP000001730">
    <property type="component" value="Chromosome 1"/>
</dbReference>
<dbReference type="GO" id="GO:0005829">
    <property type="term" value="C:cytosol"/>
    <property type="evidence" value="ECO:0007669"/>
    <property type="project" value="TreeGrafter"/>
</dbReference>
<dbReference type="GO" id="GO:0004807">
    <property type="term" value="F:triose-phosphate isomerase activity"/>
    <property type="evidence" value="ECO:0007669"/>
    <property type="project" value="UniProtKB-UniRule"/>
</dbReference>
<dbReference type="GO" id="GO:0006094">
    <property type="term" value="P:gluconeogenesis"/>
    <property type="evidence" value="ECO:0007669"/>
    <property type="project" value="UniProtKB-UniRule"/>
</dbReference>
<dbReference type="GO" id="GO:0046166">
    <property type="term" value="P:glyceraldehyde-3-phosphate biosynthetic process"/>
    <property type="evidence" value="ECO:0007669"/>
    <property type="project" value="TreeGrafter"/>
</dbReference>
<dbReference type="GO" id="GO:0019563">
    <property type="term" value="P:glycerol catabolic process"/>
    <property type="evidence" value="ECO:0007669"/>
    <property type="project" value="TreeGrafter"/>
</dbReference>
<dbReference type="GO" id="GO:0006096">
    <property type="term" value="P:glycolytic process"/>
    <property type="evidence" value="ECO:0007669"/>
    <property type="project" value="UniProtKB-UniRule"/>
</dbReference>
<dbReference type="CDD" id="cd00311">
    <property type="entry name" value="TIM"/>
    <property type="match status" value="1"/>
</dbReference>
<dbReference type="FunFam" id="3.20.20.70:FF:000020">
    <property type="entry name" value="Triosephosphate isomerase"/>
    <property type="match status" value="1"/>
</dbReference>
<dbReference type="Gene3D" id="3.20.20.70">
    <property type="entry name" value="Aldolase class I"/>
    <property type="match status" value="1"/>
</dbReference>
<dbReference type="HAMAP" id="MF_00147_B">
    <property type="entry name" value="TIM_B"/>
    <property type="match status" value="1"/>
</dbReference>
<dbReference type="InterPro" id="IPR013785">
    <property type="entry name" value="Aldolase_TIM"/>
</dbReference>
<dbReference type="InterPro" id="IPR035990">
    <property type="entry name" value="TIM_sf"/>
</dbReference>
<dbReference type="InterPro" id="IPR022896">
    <property type="entry name" value="TrioseP_Isoase_bac/euk"/>
</dbReference>
<dbReference type="InterPro" id="IPR000652">
    <property type="entry name" value="Triosephosphate_isomerase"/>
</dbReference>
<dbReference type="InterPro" id="IPR020861">
    <property type="entry name" value="Triosephosphate_isomerase_AS"/>
</dbReference>
<dbReference type="NCBIfam" id="TIGR00419">
    <property type="entry name" value="tim"/>
    <property type="match status" value="1"/>
</dbReference>
<dbReference type="PANTHER" id="PTHR21139">
    <property type="entry name" value="TRIOSEPHOSPHATE ISOMERASE"/>
    <property type="match status" value="1"/>
</dbReference>
<dbReference type="PANTHER" id="PTHR21139:SF42">
    <property type="entry name" value="TRIOSEPHOSPHATE ISOMERASE"/>
    <property type="match status" value="1"/>
</dbReference>
<dbReference type="Pfam" id="PF00121">
    <property type="entry name" value="TIM"/>
    <property type="match status" value="1"/>
</dbReference>
<dbReference type="SUPFAM" id="SSF51351">
    <property type="entry name" value="Triosephosphate isomerase (TIM)"/>
    <property type="match status" value="1"/>
</dbReference>
<dbReference type="PROSITE" id="PS00171">
    <property type="entry name" value="TIM_1"/>
    <property type="match status" value="1"/>
</dbReference>
<dbReference type="PROSITE" id="PS51440">
    <property type="entry name" value="TIM_2"/>
    <property type="match status" value="1"/>
</dbReference>
<sequence>MRHPVVMGNWKLNGSKEMVVDLLNGLNAELEGVTGVDVAVAPPALFIDLAERTLTEAGSAIILGAQNSDLNNSGAFTGDMSPAMLKEFGATHIIIGHSERREYHNESDEFVAKKFAFLKENGLTPVLCIGESDAQNEAGETMAVCARQLDAVINTQGVEALEGAIIAYEPIWAIGTGKAATAEDAQRIHAQIRAHIAEKSEEVAKNVVIQYGGSVKPENAEAYFAQPDIDGALVGGAALDAKSFAAIAKAAAKAKA</sequence>
<organism>
    <name type="scientific">Aliivibrio salmonicida (strain LFI1238)</name>
    <name type="common">Vibrio salmonicida (strain LFI1238)</name>
    <dbReference type="NCBI Taxonomy" id="316275"/>
    <lineage>
        <taxon>Bacteria</taxon>
        <taxon>Pseudomonadati</taxon>
        <taxon>Pseudomonadota</taxon>
        <taxon>Gammaproteobacteria</taxon>
        <taxon>Vibrionales</taxon>
        <taxon>Vibrionaceae</taxon>
        <taxon>Aliivibrio</taxon>
    </lineage>
</organism>
<name>TPIS_ALISL</name>
<protein>
    <recommendedName>
        <fullName evidence="1">Triosephosphate isomerase</fullName>
        <shortName evidence="1">TIM</shortName>
        <shortName evidence="1">TPI</shortName>
        <ecNumber evidence="1">5.3.1.1</ecNumber>
    </recommendedName>
    <alternativeName>
        <fullName evidence="1">Triose-phosphate isomerase</fullName>
    </alternativeName>
</protein>